<proteinExistence type="evidence at protein level"/>
<protein>
    <recommendedName>
        <fullName>Mitogen-activated protein kinase kinase kinase 15</fullName>
        <ecNumber evidence="3">2.7.11.25</ecNumber>
    </recommendedName>
    <alternativeName>
        <fullName>MAPK/ERK kinase kinase 15</fullName>
        <shortName>MEK kinase 15</shortName>
        <shortName>MEKK 15</shortName>
    </alternativeName>
</protein>
<gene>
    <name evidence="8" type="primary">Map3k15</name>
</gene>
<keyword id="KW-0067">ATP-binding</keyword>
<keyword id="KW-0175">Coiled coil</keyword>
<keyword id="KW-0418">Kinase</keyword>
<keyword id="KW-0460">Magnesium</keyword>
<keyword id="KW-0479">Metal-binding</keyword>
<keyword id="KW-0547">Nucleotide-binding</keyword>
<keyword id="KW-1185">Reference proteome</keyword>
<keyword id="KW-0723">Serine/threonine-protein kinase</keyword>
<keyword id="KW-0808">Transferase</keyword>
<evidence type="ECO:0000250" key="1">
    <source>
        <dbReference type="UniProtKB" id="P28523"/>
    </source>
</evidence>
<evidence type="ECO:0000250" key="2">
    <source>
        <dbReference type="UniProtKB" id="Q6ZN16"/>
    </source>
</evidence>
<evidence type="ECO:0000250" key="3">
    <source>
        <dbReference type="UniProtKB" id="Q99683"/>
    </source>
</evidence>
<evidence type="ECO:0000255" key="4"/>
<evidence type="ECO:0000255" key="5">
    <source>
        <dbReference type="PROSITE-ProRule" id="PRU00159"/>
    </source>
</evidence>
<evidence type="ECO:0000255" key="6">
    <source>
        <dbReference type="PROSITE-ProRule" id="PRU10027"/>
    </source>
</evidence>
<evidence type="ECO:0000256" key="7">
    <source>
        <dbReference type="SAM" id="MobiDB-lite"/>
    </source>
</evidence>
<evidence type="ECO:0000312" key="8">
    <source>
        <dbReference type="EMBL" id="CAM22391.1"/>
    </source>
</evidence>
<comment type="function">
    <text evidence="2">Serine/threonine kinase which acts as a component of the MAP kinase signal transduction pathway. Once activated, acts as an upstream activator of the p38 MAPK signal transduction cascade through the phosphorylation and activation of several MAP kinase kinases. May function in a signal transduction pathway that is activated by various cell stresses and leads to apoptosis. Involved in phosphorylation of WNK4 in response to osmotic stress or hypotonic low-chloride stimulation via the p38 MAPK signal transduction cascade.</text>
</comment>
<comment type="catalytic activity">
    <reaction evidence="3">
        <text>L-seryl-[protein] + ATP = O-phospho-L-seryl-[protein] + ADP + H(+)</text>
        <dbReference type="Rhea" id="RHEA:17989"/>
        <dbReference type="Rhea" id="RHEA-COMP:9863"/>
        <dbReference type="Rhea" id="RHEA-COMP:11604"/>
        <dbReference type="ChEBI" id="CHEBI:15378"/>
        <dbReference type="ChEBI" id="CHEBI:29999"/>
        <dbReference type="ChEBI" id="CHEBI:30616"/>
        <dbReference type="ChEBI" id="CHEBI:83421"/>
        <dbReference type="ChEBI" id="CHEBI:456216"/>
        <dbReference type="EC" id="2.7.11.25"/>
    </reaction>
</comment>
<comment type="catalytic activity">
    <reaction evidence="3">
        <text>L-threonyl-[protein] + ATP = O-phospho-L-threonyl-[protein] + ADP + H(+)</text>
        <dbReference type="Rhea" id="RHEA:46608"/>
        <dbReference type="Rhea" id="RHEA-COMP:11060"/>
        <dbReference type="Rhea" id="RHEA-COMP:11605"/>
        <dbReference type="ChEBI" id="CHEBI:15378"/>
        <dbReference type="ChEBI" id="CHEBI:30013"/>
        <dbReference type="ChEBI" id="CHEBI:30616"/>
        <dbReference type="ChEBI" id="CHEBI:61977"/>
        <dbReference type="ChEBI" id="CHEBI:456216"/>
        <dbReference type="EC" id="2.7.11.25"/>
    </reaction>
</comment>
<comment type="cofactor">
    <cofactor evidence="3">
        <name>Mg(2+)</name>
        <dbReference type="ChEBI" id="CHEBI:18420"/>
    </cofactor>
</comment>
<comment type="activity regulation">
    <text evidence="3">Contains an N-terminal autoinhibitory domain. Activated by phosphorylation at Thr-816, inhibited by phosphorylation at Ser-928 (By similarity).</text>
</comment>
<comment type="similarity">
    <text evidence="3">Belongs to the protein kinase superfamily. STE Ser/Thr protein kinase family. MAP kinase kinase kinase subfamily.</text>
</comment>
<reference key="1">
    <citation type="journal article" date="2009" name="PLoS Biol.">
        <title>Lineage-specific biology revealed by a finished genome assembly of the mouse.</title>
        <authorList>
            <person name="Church D.M."/>
            <person name="Goodstadt L."/>
            <person name="Hillier L.W."/>
            <person name="Zody M.C."/>
            <person name="Goldstein S."/>
            <person name="She X."/>
            <person name="Bult C.J."/>
            <person name="Agarwala R."/>
            <person name="Cherry J.L."/>
            <person name="DiCuccio M."/>
            <person name="Hlavina W."/>
            <person name="Kapustin Y."/>
            <person name="Meric P."/>
            <person name="Maglott D."/>
            <person name="Birtle Z."/>
            <person name="Marques A.C."/>
            <person name="Graves T."/>
            <person name="Zhou S."/>
            <person name="Teague B."/>
            <person name="Potamousis K."/>
            <person name="Churas C."/>
            <person name="Place M."/>
            <person name="Herschleb J."/>
            <person name="Runnheim R."/>
            <person name="Forrest D."/>
            <person name="Amos-Landgraf J."/>
            <person name="Schwartz D.C."/>
            <person name="Cheng Z."/>
            <person name="Lindblad-Toh K."/>
            <person name="Eichler E.E."/>
            <person name="Ponting C.P."/>
        </authorList>
    </citation>
    <scope>NUCLEOTIDE SEQUENCE [LARGE SCALE GENOMIC DNA]</scope>
</reference>
<reference key="2">
    <citation type="journal article" date="2010" name="Cell">
        <title>A tissue-specific atlas of mouse protein phosphorylation and expression.</title>
        <authorList>
            <person name="Huttlin E.L."/>
            <person name="Jedrychowski M.P."/>
            <person name="Elias J.E."/>
            <person name="Goswami T."/>
            <person name="Rad R."/>
            <person name="Beausoleil S.A."/>
            <person name="Villen J."/>
            <person name="Haas W."/>
            <person name="Sowa M.E."/>
            <person name="Gygi S.P."/>
        </authorList>
    </citation>
    <scope>IDENTIFICATION BY MASS SPECTROMETRY [LARGE SCALE ANALYSIS]</scope>
    <source>
        <tissue>Brain</tissue>
        <tissue>Kidney</tissue>
        <tissue>Lung</tissue>
    </source>
</reference>
<organism>
    <name type="scientific">Mus musculus</name>
    <name type="common">Mouse</name>
    <dbReference type="NCBI Taxonomy" id="10090"/>
    <lineage>
        <taxon>Eukaryota</taxon>
        <taxon>Metazoa</taxon>
        <taxon>Chordata</taxon>
        <taxon>Craniata</taxon>
        <taxon>Vertebrata</taxon>
        <taxon>Euteleostomi</taxon>
        <taxon>Mammalia</taxon>
        <taxon>Eutheria</taxon>
        <taxon>Euarchontoglires</taxon>
        <taxon>Glires</taxon>
        <taxon>Rodentia</taxon>
        <taxon>Myomorpha</taxon>
        <taxon>Muroidea</taxon>
        <taxon>Muridae</taxon>
        <taxon>Murinae</taxon>
        <taxon>Mus</taxon>
        <taxon>Mus</taxon>
    </lineage>
</organism>
<accession>A2AQW0</accession>
<dbReference type="EC" id="2.7.11.25" evidence="3"/>
<dbReference type="EMBL" id="AL845167">
    <property type="protein sequence ID" value="CAM22391.1"/>
    <property type="molecule type" value="Genomic_DNA"/>
</dbReference>
<dbReference type="EMBL" id="AL929452">
    <property type="protein sequence ID" value="CAM22391.1"/>
    <property type="status" value="JOINED"/>
    <property type="molecule type" value="Genomic_DNA"/>
</dbReference>
<dbReference type="EMBL" id="AL929452">
    <property type="protein sequence ID" value="CAM21674.1"/>
    <property type="molecule type" value="Genomic_DNA"/>
</dbReference>
<dbReference type="EMBL" id="AL845167">
    <property type="protein sequence ID" value="CAM21674.1"/>
    <property type="status" value="JOINED"/>
    <property type="molecule type" value="Genomic_DNA"/>
</dbReference>
<dbReference type="CCDS" id="CCDS53236.1"/>
<dbReference type="RefSeq" id="NP_001156557.2">
    <property type="nucleotide sequence ID" value="NM_001163085.4"/>
</dbReference>
<dbReference type="SMR" id="A2AQW0"/>
<dbReference type="BioGRID" id="234812">
    <property type="interactions" value="3"/>
</dbReference>
<dbReference type="FunCoup" id="A2AQW0">
    <property type="interactions" value="42"/>
</dbReference>
<dbReference type="STRING" id="10090.ENSMUSP00000033665"/>
<dbReference type="GlyGen" id="A2AQW0">
    <property type="glycosylation" value="2 sites, 1 O-linked glycan (1 site)"/>
</dbReference>
<dbReference type="iPTMnet" id="A2AQW0"/>
<dbReference type="PhosphoSitePlus" id="A2AQW0"/>
<dbReference type="PaxDb" id="10090-ENSMUSP00000033665"/>
<dbReference type="ProteomicsDB" id="295748"/>
<dbReference type="Antibodypedia" id="571">
    <property type="antibodies" value="146 antibodies from 26 providers"/>
</dbReference>
<dbReference type="Ensembl" id="ENSMUST00000033665.9">
    <property type="protein sequence ID" value="ENSMUSP00000033665.9"/>
    <property type="gene ID" value="ENSMUSG00000031303.9"/>
</dbReference>
<dbReference type="GeneID" id="270672"/>
<dbReference type="KEGG" id="mmu:270672"/>
<dbReference type="UCSC" id="uc009utb.2">
    <property type="organism name" value="mouse"/>
</dbReference>
<dbReference type="AGR" id="MGI:2448588"/>
<dbReference type="CTD" id="389840"/>
<dbReference type="MGI" id="MGI:2448588">
    <property type="gene designation" value="Map3k15"/>
</dbReference>
<dbReference type="VEuPathDB" id="HostDB:ENSMUSG00000031303"/>
<dbReference type="eggNOG" id="KOG4279">
    <property type="taxonomic scope" value="Eukaryota"/>
</dbReference>
<dbReference type="GeneTree" id="ENSGT00940000159562"/>
<dbReference type="HOGENOM" id="CLU_003687_1_0_1"/>
<dbReference type="InParanoid" id="A2AQW0"/>
<dbReference type="OMA" id="CLCGRIC"/>
<dbReference type="OrthoDB" id="275301at2759"/>
<dbReference type="PhylomeDB" id="A2AQW0"/>
<dbReference type="TreeFam" id="TF105115"/>
<dbReference type="BioGRID-ORCS" id="270672">
    <property type="hits" value="3 hits in 83 CRISPR screens"/>
</dbReference>
<dbReference type="ChiTaRS" id="Map3k15">
    <property type="organism name" value="mouse"/>
</dbReference>
<dbReference type="PRO" id="PR:A2AQW0"/>
<dbReference type="Proteomes" id="UP000000589">
    <property type="component" value="Chromosome X"/>
</dbReference>
<dbReference type="RNAct" id="A2AQW0">
    <property type="molecule type" value="protein"/>
</dbReference>
<dbReference type="Bgee" id="ENSMUSG00000031303">
    <property type="expression patterns" value="Expressed in granulocyte and 54 other cell types or tissues"/>
</dbReference>
<dbReference type="GO" id="GO:0005524">
    <property type="term" value="F:ATP binding"/>
    <property type="evidence" value="ECO:0007669"/>
    <property type="project" value="UniProtKB-KW"/>
</dbReference>
<dbReference type="GO" id="GO:0004709">
    <property type="term" value="F:MAP kinase kinase kinase activity"/>
    <property type="evidence" value="ECO:0000250"/>
    <property type="project" value="UniProtKB"/>
</dbReference>
<dbReference type="GO" id="GO:0046872">
    <property type="term" value="F:metal ion binding"/>
    <property type="evidence" value="ECO:0007669"/>
    <property type="project" value="UniProtKB-KW"/>
</dbReference>
<dbReference type="GO" id="GO:0106310">
    <property type="term" value="F:protein serine kinase activity"/>
    <property type="evidence" value="ECO:0007669"/>
    <property type="project" value="RHEA"/>
</dbReference>
<dbReference type="CDD" id="cd06624">
    <property type="entry name" value="STKc_ASK"/>
    <property type="match status" value="1"/>
</dbReference>
<dbReference type="FunFam" id="1.10.510.10:FF:000054">
    <property type="entry name" value="Mitogen-activated protein kinase kinase kinase 5"/>
    <property type="match status" value="1"/>
</dbReference>
<dbReference type="FunFam" id="3.30.200.20:FF:000067">
    <property type="entry name" value="Mitogen-activated protein kinase kinase kinase 5"/>
    <property type="match status" value="1"/>
</dbReference>
<dbReference type="Gene3D" id="3.30.200.20">
    <property type="entry name" value="Phosphorylase Kinase, domain 1"/>
    <property type="match status" value="1"/>
</dbReference>
<dbReference type="Gene3D" id="1.10.510.10">
    <property type="entry name" value="Transferase(Phosphotransferase) domain 1"/>
    <property type="match status" value="1"/>
</dbReference>
<dbReference type="InterPro" id="IPR046872">
    <property type="entry name" value="DRHyd-ASK"/>
</dbReference>
<dbReference type="InterPro" id="IPR046873">
    <property type="entry name" value="HisK-N-like"/>
</dbReference>
<dbReference type="InterPro" id="IPR011009">
    <property type="entry name" value="Kinase-like_dom_sf"/>
</dbReference>
<dbReference type="InterPro" id="IPR043969">
    <property type="entry name" value="MAP3K_PH"/>
</dbReference>
<dbReference type="InterPro" id="IPR025136">
    <property type="entry name" value="MAP3K_TRAF-bd"/>
</dbReference>
<dbReference type="InterPro" id="IPR000719">
    <property type="entry name" value="Prot_kinase_dom"/>
</dbReference>
<dbReference type="InterPro" id="IPR017441">
    <property type="entry name" value="Protein_kinase_ATP_BS"/>
</dbReference>
<dbReference type="InterPro" id="IPR013761">
    <property type="entry name" value="SAM/pointed_sf"/>
</dbReference>
<dbReference type="InterPro" id="IPR008271">
    <property type="entry name" value="Ser/Thr_kinase_AS"/>
</dbReference>
<dbReference type="PANTHER" id="PTHR11584:SF363">
    <property type="entry name" value="MITOGEN-ACTIVATED PROTEIN KINASE KINASE KINASE 15"/>
    <property type="match status" value="1"/>
</dbReference>
<dbReference type="PANTHER" id="PTHR11584">
    <property type="entry name" value="SERINE/THREONINE PROTEIN KINASE"/>
    <property type="match status" value="1"/>
</dbReference>
<dbReference type="Pfam" id="PF19039">
    <property type="entry name" value="ASK_PH"/>
    <property type="match status" value="1"/>
</dbReference>
<dbReference type="Pfam" id="PF20309">
    <property type="entry name" value="DRHyd-ASK"/>
    <property type="match status" value="1"/>
</dbReference>
<dbReference type="Pfam" id="PF20302">
    <property type="entry name" value="HisK-N-like"/>
    <property type="match status" value="1"/>
</dbReference>
<dbReference type="Pfam" id="PF13281">
    <property type="entry name" value="MAP3K_TRAF_bd"/>
    <property type="match status" value="1"/>
</dbReference>
<dbReference type="Pfam" id="PF00069">
    <property type="entry name" value="Pkinase"/>
    <property type="match status" value="1"/>
</dbReference>
<dbReference type="SMART" id="SM00220">
    <property type="entry name" value="S_TKc"/>
    <property type="match status" value="1"/>
</dbReference>
<dbReference type="SUPFAM" id="SSF56112">
    <property type="entry name" value="Protein kinase-like (PK-like)"/>
    <property type="match status" value="1"/>
</dbReference>
<dbReference type="SUPFAM" id="SSF47769">
    <property type="entry name" value="SAM/Pointed domain"/>
    <property type="match status" value="1"/>
</dbReference>
<dbReference type="PROSITE" id="PS00107">
    <property type="entry name" value="PROTEIN_KINASE_ATP"/>
    <property type="match status" value="1"/>
</dbReference>
<dbReference type="PROSITE" id="PS50011">
    <property type="entry name" value="PROTEIN_KINASE_DOM"/>
    <property type="match status" value="1"/>
</dbReference>
<dbReference type="PROSITE" id="PS00108">
    <property type="entry name" value="PROTEIN_KINASE_ST"/>
    <property type="match status" value="1"/>
</dbReference>
<name>M3K15_MOUSE</name>
<sequence>MEGGGGSGGGGGPVPAEAPEEAGEPPQGRLPPGPEGAAGLAEPESTGDAAGGEAEGGRGPRRALRAVYVRSESSQGAAAGGGPEAGALKCLLRACEAEGAHLTSVPFGELDFGETAVLDAFYDADVAIVDMSDISRQPSLFYHLGVRESFDMANNVILYYDTDADTALSLKDMVTQKNTASSGNYYFIPYTVTPCADYFCCESDAQRRASEYMQPNWDTILGPLCMPLVDRFTSLLKDIRVTSCAYYKETLLNDIRKAREKYQGDELAKELTRIKFRMDNIEVLTSDIIINLLLSYRDIQDYDAMVKLVETLKMLPTCDLADQHNIKFHYAFALNRRNSTGDREKALQVMLQVLQSCDHPAPDMFCLCGRIYKDIFLDSGCEEDASRDSAIEWYRKGFELQSSLYSGINLAVLLIVSGQQFETSMELRKIGVRLNSLLGRKGSLEKMNNYWDVGQFFTVSMLASDIGKAVQAAERLFKLKPPVWYLRSLVQNLLLIQRFKKPITEHSPRQERLNFWLDIIFEATNEVTNGLRFPVLVIEPTKVYQPSYVSINNEAEERTVSLWHVSPTEMKQIHEWNFTASSIKGISLSKFDERCCFLYVHDNSDDFQIYFSTEDQCNRFCSLVKEMLNNGVGSTVELEGEADGDTLEYEYDHDANGERVVLGKGSYGIVYAGRDLSNQVRIAIKEIPERDIRYSQPLHEEIALHKYLKHRNIVQYLGSVSENGYIKIFMEQVPGGSLSALLRSKWGPMKEPTIKFYTKQILEGLKYLHENQIVHRDIKGDNVLVNTYSGVVKISDFGTSKRLAGINPCTETFTGTLQYMAPEIIDQGPRGYGAPADIWSLGCTIIEMATSRPPFHELGEPQAAMFKVGMFKIHPEIPEALSAEARAFILSCFEPDPQKRVTAADLLQEGFLRQVNKGKKNRIAFKPSEGVRSGTGTLALPSSGELVGSSSSEHGSISPDSDAQPDAFFEKVQVPKHQLSHLLSVPDESPALDDRSTALPPEERDPGLFLLRKDSERRAILYRILWEEQNQVASNLQECVVQSSEELLLSVSHIKQIIGILRDFIRSPEHRVMAATISKLKVDLDFDSSSINQIHLILFGFQDAVNRILRNHLIRPHWMFAMDNIIRRAVQAAVTILIPELQAHFEPASETEGVDKDTEVEGDYPLVDLLSQEVHVTPRGTRPGSVAIQEGQPHQQDPSLQLSKLRQETNRLWEHLVQKEREYQNLLRLILDQKTQELYHLQLQYKSNGGTENPPPPDGLGTDRELIDWLQLQGVDANTIEKIVEEDYTLSDILNDITKEDLRCLRLRGGVLCRLWHAVSQHRRQMQESSQ</sequence>
<feature type="chain" id="PRO_0000307633" description="Mitogen-activated protein kinase kinase kinase 15">
    <location>
        <begin position="1"/>
        <end position="1331"/>
    </location>
</feature>
<feature type="domain" description="Protein kinase" evidence="5">
    <location>
        <begin position="656"/>
        <end position="912"/>
    </location>
</feature>
<feature type="region of interest" description="Disordered" evidence="7">
    <location>
        <begin position="1"/>
        <end position="61"/>
    </location>
</feature>
<feature type="region of interest" description="Disordered" evidence="7">
    <location>
        <begin position="934"/>
        <end position="964"/>
    </location>
</feature>
<feature type="region of interest" description="Disordered" evidence="7">
    <location>
        <begin position="983"/>
        <end position="1005"/>
    </location>
</feature>
<feature type="coiled-coil region" evidence="4">
    <location>
        <begin position="1216"/>
        <end position="1236"/>
    </location>
</feature>
<feature type="compositionally biased region" description="Gly residues" evidence="7">
    <location>
        <begin position="1"/>
        <end position="13"/>
    </location>
</feature>
<feature type="compositionally biased region" description="Low complexity" evidence="7">
    <location>
        <begin position="940"/>
        <end position="962"/>
    </location>
</feature>
<feature type="compositionally biased region" description="Basic and acidic residues" evidence="7">
    <location>
        <begin position="992"/>
        <end position="1005"/>
    </location>
</feature>
<feature type="active site" description="Proton acceptor" evidence="1 5 6">
    <location>
        <position position="777"/>
    </location>
</feature>
<feature type="binding site" evidence="1 5">
    <location>
        <begin position="662"/>
        <end position="670"/>
    </location>
    <ligand>
        <name>ATP</name>
        <dbReference type="ChEBI" id="CHEBI:30616"/>
    </ligand>
</feature>
<feature type="binding site" evidence="3 5">
    <location>
        <position position="685"/>
    </location>
    <ligand>
        <name>ATP</name>
        <dbReference type="ChEBI" id="CHEBI:30616"/>
    </ligand>
</feature>